<feature type="chain" id="PRO_0000132013" description="Cytidylate kinase">
    <location>
        <begin position="1"/>
        <end position="178"/>
    </location>
</feature>
<feature type="binding site" evidence="1">
    <location>
        <begin position="7"/>
        <end position="15"/>
    </location>
    <ligand>
        <name>ATP</name>
        <dbReference type="ChEBI" id="CHEBI:30616"/>
    </ligand>
</feature>
<comment type="catalytic activity">
    <reaction>
        <text>CMP + ATP = CDP + ADP</text>
        <dbReference type="Rhea" id="RHEA:11600"/>
        <dbReference type="ChEBI" id="CHEBI:30616"/>
        <dbReference type="ChEBI" id="CHEBI:58069"/>
        <dbReference type="ChEBI" id="CHEBI:60377"/>
        <dbReference type="ChEBI" id="CHEBI:456216"/>
        <dbReference type="EC" id="2.7.4.25"/>
    </reaction>
</comment>
<comment type="catalytic activity">
    <reaction>
        <text>dCMP + ATP = dCDP + ADP</text>
        <dbReference type="Rhea" id="RHEA:25094"/>
        <dbReference type="ChEBI" id="CHEBI:30616"/>
        <dbReference type="ChEBI" id="CHEBI:57566"/>
        <dbReference type="ChEBI" id="CHEBI:58593"/>
        <dbReference type="ChEBI" id="CHEBI:456216"/>
        <dbReference type="EC" id="2.7.4.25"/>
    </reaction>
</comment>
<comment type="subcellular location">
    <subcellularLocation>
        <location evidence="1">Cytoplasm</location>
    </subcellularLocation>
</comment>
<comment type="similarity">
    <text evidence="2">Belongs to the cytidylate kinase family. Type 2 subfamily.</text>
</comment>
<dbReference type="EC" id="2.7.4.25"/>
<dbReference type="EMBL" id="L77117">
    <property type="protein sequence ID" value="AAB98651.1"/>
    <property type="molecule type" value="Genomic_DNA"/>
</dbReference>
<dbReference type="PIR" id="H64381">
    <property type="entry name" value="H64381"/>
</dbReference>
<dbReference type="RefSeq" id="WP_010870161.1">
    <property type="nucleotide sequence ID" value="NC_000909.1"/>
</dbReference>
<dbReference type="SMR" id="Q58071"/>
<dbReference type="FunCoup" id="Q58071">
    <property type="interactions" value="26"/>
</dbReference>
<dbReference type="STRING" id="243232.MJ_0656"/>
<dbReference type="PaxDb" id="243232-MJ_0656"/>
<dbReference type="EnsemblBacteria" id="AAB98651">
    <property type="protein sequence ID" value="AAB98651"/>
    <property type="gene ID" value="MJ_0656"/>
</dbReference>
<dbReference type="GeneID" id="1451522"/>
<dbReference type="KEGG" id="mja:MJ_0656"/>
<dbReference type="eggNOG" id="arCOG01037">
    <property type="taxonomic scope" value="Archaea"/>
</dbReference>
<dbReference type="HOGENOM" id="CLU_079959_1_0_2"/>
<dbReference type="InParanoid" id="Q58071"/>
<dbReference type="OrthoDB" id="31096at2157"/>
<dbReference type="PhylomeDB" id="Q58071"/>
<dbReference type="Proteomes" id="UP000000805">
    <property type="component" value="Chromosome"/>
</dbReference>
<dbReference type="GO" id="GO:0005737">
    <property type="term" value="C:cytoplasm"/>
    <property type="evidence" value="ECO:0007669"/>
    <property type="project" value="UniProtKB-SubCell"/>
</dbReference>
<dbReference type="GO" id="GO:0005524">
    <property type="term" value="F:ATP binding"/>
    <property type="evidence" value="ECO:0007669"/>
    <property type="project" value="UniProtKB-UniRule"/>
</dbReference>
<dbReference type="GO" id="GO:0036430">
    <property type="term" value="F:CMP kinase activity"/>
    <property type="evidence" value="ECO:0007669"/>
    <property type="project" value="RHEA"/>
</dbReference>
<dbReference type="GO" id="GO:0036431">
    <property type="term" value="F:dCMP kinase activity"/>
    <property type="evidence" value="ECO:0007669"/>
    <property type="project" value="RHEA"/>
</dbReference>
<dbReference type="GO" id="GO:0006220">
    <property type="term" value="P:pyrimidine nucleotide metabolic process"/>
    <property type="evidence" value="ECO:0007669"/>
    <property type="project" value="UniProtKB-UniRule"/>
</dbReference>
<dbReference type="CDD" id="cd02020">
    <property type="entry name" value="CMPK"/>
    <property type="match status" value="1"/>
</dbReference>
<dbReference type="Gene3D" id="3.40.50.300">
    <property type="entry name" value="P-loop containing nucleotide triphosphate hydrolases"/>
    <property type="match status" value="1"/>
</dbReference>
<dbReference type="HAMAP" id="MF_00239">
    <property type="entry name" value="Cytidyl_kinase_type2"/>
    <property type="match status" value="1"/>
</dbReference>
<dbReference type="InterPro" id="IPR011892">
    <property type="entry name" value="Cyt_kin_arch"/>
</dbReference>
<dbReference type="InterPro" id="IPR011994">
    <property type="entry name" value="Cytidylate_kinase_dom"/>
</dbReference>
<dbReference type="InterPro" id="IPR027417">
    <property type="entry name" value="P-loop_NTPase"/>
</dbReference>
<dbReference type="NCBIfam" id="TIGR02173">
    <property type="entry name" value="cyt_kin_arch"/>
    <property type="match status" value="1"/>
</dbReference>
<dbReference type="Pfam" id="PF13189">
    <property type="entry name" value="Cytidylate_kin2"/>
    <property type="match status" value="1"/>
</dbReference>
<dbReference type="SUPFAM" id="SSF52540">
    <property type="entry name" value="P-loop containing nucleoside triphosphate hydrolases"/>
    <property type="match status" value="1"/>
</dbReference>
<sequence length="178" mass="20495">MIITIGGLPGTGTTTIAKMIAEKYNLRHVCAGFIFREMAKEMGMDLQEFSKYAEQHKEIDEEIDRRQVEIAKQGNVVLEGRLAAWMLLKNGIKPDLTIWFKAPLEVRAERISKRENIDKDVALKKMIEREASEKKRYKEIYNIDLDDLSIYDLVIDTSKWDVEGVFNIVSSAIDNLKK</sequence>
<evidence type="ECO:0000250" key="1"/>
<evidence type="ECO:0000305" key="2"/>
<accession>Q58071</accession>
<reference key="1">
    <citation type="journal article" date="1996" name="Science">
        <title>Complete genome sequence of the methanogenic archaeon, Methanococcus jannaschii.</title>
        <authorList>
            <person name="Bult C.J."/>
            <person name="White O."/>
            <person name="Olsen G.J."/>
            <person name="Zhou L."/>
            <person name="Fleischmann R.D."/>
            <person name="Sutton G.G."/>
            <person name="Blake J.A."/>
            <person name="FitzGerald L.M."/>
            <person name="Clayton R.A."/>
            <person name="Gocayne J.D."/>
            <person name="Kerlavage A.R."/>
            <person name="Dougherty B.A."/>
            <person name="Tomb J.-F."/>
            <person name="Adams M.D."/>
            <person name="Reich C.I."/>
            <person name="Overbeek R."/>
            <person name="Kirkness E.F."/>
            <person name="Weinstock K.G."/>
            <person name="Merrick J.M."/>
            <person name="Glodek A."/>
            <person name="Scott J.L."/>
            <person name="Geoghagen N.S.M."/>
            <person name="Weidman J.F."/>
            <person name="Fuhrmann J.L."/>
            <person name="Nguyen D."/>
            <person name="Utterback T.R."/>
            <person name="Kelley J.M."/>
            <person name="Peterson J.D."/>
            <person name="Sadow P.W."/>
            <person name="Hanna M.C."/>
            <person name="Cotton M.D."/>
            <person name="Roberts K.M."/>
            <person name="Hurst M.A."/>
            <person name="Kaine B.P."/>
            <person name="Borodovsky M."/>
            <person name="Klenk H.-P."/>
            <person name="Fraser C.M."/>
            <person name="Smith H.O."/>
            <person name="Woese C.R."/>
            <person name="Venter J.C."/>
        </authorList>
    </citation>
    <scope>NUCLEOTIDE SEQUENCE [LARGE SCALE GENOMIC DNA]</scope>
    <source>
        <strain>ATCC 43067 / DSM 2661 / JAL-1 / JCM 10045 / NBRC 100440</strain>
    </source>
</reference>
<organism>
    <name type="scientific">Methanocaldococcus jannaschii (strain ATCC 43067 / DSM 2661 / JAL-1 / JCM 10045 / NBRC 100440)</name>
    <name type="common">Methanococcus jannaschii</name>
    <dbReference type="NCBI Taxonomy" id="243232"/>
    <lineage>
        <taxon>Archaea</taxon>
        <taxon>Methanobacteriati</taxon>
        <taxon>Methanobacteriota</taxon>
        <taxon>Methanomada group</taxon>
        <taxon>Methanococci</taxon>
        <taxon>Methanococcales</taxon>
        <taxon>Methanocaldococcaceae</taxon>
        <taxon>Methanocaldococcus</taxon>
    </lineage>
</organism>
<name>KCY_METJA</name>
<keyword id="KW-0067">ATP-binding</keyword>
<keyword id="KW-0963">Cytoplasm</keyword>
<keyword id="KW-0418">Kinase</keyword>
<keyword id="KW-0547">Nucleotide-binding</keyword>
<keyword id="KW-1185">Reference proteome</keyword>
<keyword id="KW-0808">Transferase</keyword>
<protein>
    <recommendedName>
        <fullName>Cytidylate kinase</fullName>
        <shortName>CK</shortName>
        <ecNumber>2.7.4.25</ecNumber>
    </recommendedName>
    <alternativeName>
        <fullName>Cytidine monophosphate kinase</fullName>
        <shortName>CMP kinase</shortName>
    </alternativeName>
</protein>
<gene>
    <name type="primary">cmk</name>
    <name type="ordered locus">MJ0656</name>
</gene>
<proteinExistence type="inferred from homology"/>